<reference key="1">
    <citation type="submission" date="2009-03" db="EMBL/GenBank/DDBJ databases">
        <title>Brucella melitensis ATCC 23457 whole genome shotgun sequencing project.</title>
        <authorList>
            <person name="Setubal J.C."/>
            <person name="Boyle S."/>
            <person name="Crasta O.R."/>
            <person name="Gillespie J.J."/>
            <person name="Kenyon R.W."/>
            <person name="Lu J."/>
            <person name="Mane S."/>
            <person name="Nagrani S."/>
            <person name="Shallom J.M."/>
            <person name="Shallom S."/>
            <person name="Shukla M."/>
            <person name="Snyder E.E."/>
            <person name="Sobral B.W."/>
            <person name="Wattam A.R."/>
            <person name="Will R."/>
            <person name="Williams K."/>
            <person name="Yoo H."/>
            <person name="Munk C."/>
            <person name="Tapia R."/>
            <person name="Han C."/>
            <person name="Detter J.C."/>
            <person name="Bruce D."/>
            <person name="Brettin T.S."/>
        </authorList>
    </citation>
    <scope>NUCLEOTIDE SEQUENCE [LARGE SCALE GENOMIC DNA]</scope>
    <source>
        <strain>ATCC 23457</strain>
    </source>
</reference>
<evidence type="ECO:0000255" key="1">
    <source>
        <dbReference type="HAMAP-Rule" id="MF_00133"/>
    </source>
</evidence>
<gene>
    <name evidence="1" type="primary">trpB</name>
    <name type="ordered locus">BMEA_A2170</name>
</gene>
<organism>
    <name type="scientific">Brucella melitensis biotype 2 (strain ATCC 23457)</name>
    <dbReference type="NCBI Taxonomy" id="546272"/>
    <lineage>
        <taxon>Bacteria</taxon>
        <taxon>Pseudomonadati</taxon>
        <taxon>Pseudomonadota</taxon>
        <taxon>Alphaproteobacteria</taxon>
        <taxon>Hyphomicrobiales</taxon>
        <taxon>Brucellaceae</taxon>
        <taxon>Brucella/Ochrobactrum group</taxon>
        <taxon>Brucella</taxon>
    </lineage>
</organism>
<dbReference type="EC" id="4.2.1.20" evidence="1"/>
<dbReference type="EMBL" id="CP001488">
    <property type="protein sequence ID" value="ACO01816.1"/>
    <property type="molecule type" value="Genomic_DNA"/>
</dbReference>
<dbReference type="SMR" id="C0RFZ4"/>
<dbReference type="KEGG" id="bmi:BMEA_A2170"/>
<dbReference type="HOGENOM" id="CLU_016734_3_1_5"/>
<dbReference type="UniPathway" id="UPA00035">
    <property type="reaction ID" value="UER00044"/>
</dbReference>
<dbReference type="PRO" id="PR:C0RFZ4"/>
<dbReference type="Proteomes" id="UP000001748">
    <property type="component" value="Chromosome I"/>
</dbReference>
<dbReference type="GO" id="GO:0005737">
    <property type="term" value="C:cytoplasm"/>
    <property type="evidence" value="ECO:0007669"/>
    <property type="project" value="TreeGrafter"/>
</dbReference>
<dbReference type="GO" id="GO:0004834">
    <property type="term" value="F:tryptophan synthase activity"/>
    <property type="evidence" value="ECO:0007669"/>
    <property type="project" value="UniProtKB-UniRule"/>
</dbReference>
<dbReference type="CDD" id="cd06446">
    <property type="entry name" value="Trp-synth_B"/>
    <property type="match status" value="1"/>
</dbReference>
<dbReference type="FunFam" id="3.40.50.1100:FF:000001">
    <property type="entry name" value="Tryptophan synthase beta chain"/>
    <property type="match status" value="1"/>
</dbReference>
<dbReference type="FunFam" id="3.40.50.1100:FF:000004">
    <property type="entry name" value="Tryptophan synthase beta chain"/>
    <property type="match status" value="1"/>
</dbReference>
<dbReference type="Gene3D" id="3.40.50.1100">
    <property type="match status" value="2"/>
</dbReference>
<dbReference type="HAMAP" id="MF_00133">
    <property type="entry name" value="Trp_synth_beta"/>
    <property type="match status" value="1"/>
</dbReference>
<dbReference type="InterPro" id="IPR006653">
    <property type="entry name" value="Trp_synth_b_CS"/>
</dbReference>
<dbReference type="InterPro" id="IPR006654">
    <property type="entry name" value="Trp_synth_beta"/>
</dbReference>
<dbReference type="InterPro" id="IPR023026">
    <property type="entry name" value="Trp_synth_beta/beta-like"/>
</dbReference>
<dbReference type="InterPro" id="IPR001926">
    <property type="entry name" value="TrpB-like_PALP"/>
</dbReference>
<dbReference type="InterPro" id="IPR036052">
    <property type="entry name" value="TrpB-like_PALP_sf"/>
</dbReference>
<dbReference type="NCBIfam" id="TIGR00263">
    <property type="entry name" value="trpB"/>
    <property type="match status" value="1"/>
</dbReference>
<dbReference type="PANTHER" id="PTHR48077:SF3">
    <property type="entry name" value="TRYPTOPHAN SYNTHASE"/>
    <property type="match status" value="1"/>
</dbReference>
<dbReference type="PANTHER" id="PTHR48077">
    <property type="entry name" value="TRYPTOPHAN SYNTHASE-RELATED"/>
    <property type="match status" value="1"/>
</dbReference>
<dbReference type="Pfam" id="PF00291">
    <property type="entry name" value="PALP"/>
    <property type="match status" value="1"/>
</dbReference>
<dbReference type="PIRSF" id="PIRSF001413">
    <property type="entry name" value="Trp_syn_beta"/>
    <property type="match status" value="1"/>
</dbReference>
<dbReference type="SUPFAM" id="SSF53686">
    <property type="entry name" value="Tryptophan synthase beta subunit-like PLP-dependent enzymes"/>
    <property type="match status" value="1"/>
</dbReference>
<dbReference type="PROSITE" id="PS00168">
    <property type="entry name" value="TRP_SYNTHASE_BETA"/>
    <property type="match status" value="1"/>
</dbReference>
<comment type="function">
    <text evidence="1">The beta subunit is responsible for the synthesis of L-tryptophan from indole and L-serine.</text>
</comment>
<comment type="catalytic activity">
    <reaction evidence="1">
        <text>(1S,2R)-1-C-(indol-3-yl)glycerol 3-phosphate + L-serine = D-glyceraldehyde 3-phosphate + L-tryptophan + H2O</text>
        <dbReference type="Rhea" id="RHEA:10532"/>
        <dbReference type="ChEBI" id="CHEBI:15377"/>
        <dbReference type="ChEBI" id="CHEBI:33384"/>
        <dbReference type="ChEBI" id="CHEBI:57912"/>
        <dbReference type="ChEBI" id="CHEBI:58866"/>
        <dbReference type="ChEBI" id="CHEBI:59776"/>
        <dbReference type="EC" id="4.2.1.20"/>
    </reaction>
</comment>
<comment type="cofactor">
    <cofactor evidence="1">
        <name>pyridoxal 5'-phosphate</name>
        <dbReference type="ChEBI" id="CHEBI:597326"/>
    </cofactor>
</comment>
<comment type="pathway">
    <text evidence="1">Amino-acid biosynthesis; L-tryptophan biosynthesis; L-tryptophan from chorismate: step 5/5.</text>
</comment>
<comment type="subunit">
    <text evidence="1">Tetramer of two alpha and two beta chains.</text>
</comment>
<comment type="similarity">
    <text evidence="1">Belongs to the TrpB family.</text>
</comment>
<keyword id="KW-0028">Amino-acid biosynthesis</keyword>
<keyword id="KW-0057">Aromatic amino acid biosynthesis</keyword>
<keyword id="KW-0456">Lyase</keyword>
<keyword id="KW-0663">Pyridoxal phosphate</keyword>
<keyword id="KW-0822">Tryptophan biosynthesis</keyword>
<name>TRPB_BRUMB</name>
<proteinExistence type="inferred from homology"/>
<protein>
    <recommendedName>
        <fullName evidence="1">Tryptophan synthase beta chain</fullName>
        <ecNumber evidence="1">4.2.1.20</ecNumber>
    </recommendedName>
</protein>
<accession>C0RFZ4</accession>
<feature type="chain" id="PRO_1000198741" description="Tryptophan synthase beta chain">
    <location>
        <begin position="1"/>
        <end position="406"/>
    </location>
</feature>
<feature type="modified residue" description="N6-(pyridoxal phosphate)lysine" evidence="1">
    <location>
        <position position="99"/>
    </location>
</feature>
<sequence length="406" mass="43525">MNKPVAPNSYKTGPDEEGMFGIFGGRFVAETLMPLILELQQAYETAKNDPEFKAELNALSTFYAGRPSKLYYAEGLSKHLGGAKIYFKREDLNHTGSHKINNCLGQILLAKRMGKTRIIAETGAGQHGVASATVAARFGLPCIVYVGASDVERQKPNVFRMKLLGAEVKPVSAGNGTLKDAMNEALRDWVTNVEDTYYLIGTAAGPHPYPELVRDFQSVIGTEARQQILEQEGRLPDVIVAAVGGGSNAIGLFHPFLDDASVKIVGVEAGGRGLEGEEHCASMSAGRPGVLHGNRTYLLQNADGQILEGHSVSAGLDYPGVGPEHSWLKDSGRVDYVPILDNEALDAFQLCTRTEGIIPALESAHAIAQAVKMAPTMGKDKVMIVNLSGRGDKDVHTVGKLLGMDI</sequence>